<dbReference type="EMBL" id="CP001019">
    <property type="protein sequence ID" value="ACJ19038.1"/>
    <property type="molecule type" value="Genomic_DNA"/>
</dbReference>
<dbReference type="RefSeq" id="WP_010957456.1">
    <property type="nucleotide sequence ID" value="NC_011527.1"/>
</dbReference>
<dbReference type="SMR" id="B6J260"/>
<dbReference type="KEGG" id="cbg:CbuG_1764"/>
<dbReference type="HOGENOM" id="CLU_036235_2_1_6"/>
<dbReference type="GO" id="GO:0015934">
    <property type="term" value="C:large ribosomal subunit"/>
    <property type="evidence" value="ECO:0007669"/>
    <property type="project" value="InterPro"/>
</dbReference>
<dbReference type="GO" id="GO:0019843">
    <property type="term" value="F:rRNA binding"/>
    <property type="evidence" value="ECO:0007669"/>
    <property type="project" value="UniProtKB-UniRule"/>
</dbReference>
<dbReference type="GO" id="GO:0003735">
    <property type="term" value="F:structural constituent of ribosome"/>
    <property type="evidence" value="ECO:0007669"/>
    <property type="project" value="InterPro"/>
</dbReference>
<dbReference type="GO" id="GO:0016740">
    <property type="term" value="F:transferase activity"/>
    <property type="evidence" value="ECO:0007669"/>
    <property type="project" value="InterPro"/>
</dbReference>
<dbReference type="GO" id="GO:0002181">
    <property type="term" value="P:cytoplasmic translation"/>
    <property type="evidence" value="ECO:0007669"/>
    <property type="project" value="TreeGrafter"/>
</dbReference>
<dbReference type="FunFam" id="2.30.30.30:FF:000001">
    <property type="entry name" value="50S ribosomal protein L2"/>
    <property type="match status" value="1"/>
</dbReference>
<dbReference type="FunFam" id="2.40.50.140:FF:000003">
    <property type="entry name" value="50S ribosomal protein L2"/>
    <property type="match status" value="1"/>
</dbReference>
<dbReference type="FunFam" id="4.10.950.10:FF:000001">
    <property type="entry name" value="50S ribosomal protein L2"/>
    <property type="match status" value="1"/>
</dbReference>
<dbReference type="Gene3D" id="2.30.30.30">
    <property type="match status" value="1"/>
</dbReference>
<dbReference type="Gene3D" id="2.40.50.140">
    <property type="entry name" value="Nucleic acid-binding proteins"/>
    <property type="match status" value="1"/>
</dbReference>
<dbReference type="Gene3D" id="4.10.950.10">
    <property type="entry name" value="Ribosomal protein L2, domain 3"/>
    <property type="match status" value="1"/>
</dbReference>
<dbReference type="HAMAP" id="MF_01320_B">
    <property type="entry name" value="Ribosomal_uL2_B"/>
    <property type="match status" value="1"/>
</dbReference>
<dbReference type="InterPro" id="IPR012340">
    <property type="entry name" value="NA-bd_OB-fold"/>
</dbReference>
<dbReference type="InterPro" id="IPR014722">
    <property type="entry name" value="Rib_uL2_dom2"/>
</dbReference>
<dbReference type="InterPro" id="IPR002171">
    <property type="entry name" value="Ribosomal_uL2"/>
</dbReference>
<dbReference type="InterPro" id="IPR005880">
    <property type="entry name" value="Ribosomal_uL2_bac/org-type"/>
</dbReference>
<dbReference type="InterPro" id="IPR022669">
    <property type="entry name" value="Ribosomal_uL2_C"/>
</dbReference>
<dbReference type="InterPro" id="IPR022671">
    <property type="entry name" value="Ribosomal_uL2_CS"/>
</dbReference>
<dbReference type="InterPro" id="IPR014726">
    <property type="entry name" value="Ribosomal_uL2_dom3"/>
</dbReference>
<dbReference type="InterPro" id="IPR022666">
    <property type="entry name" value="Ribosomal_uL2_RNA-bd_dom"/>
</dbReference>
<dbReference type="InterPro" id="IPR008991">
    <property type="entry name" value="Translation_prot_SH3-like_sf"/>
</dbReference>
<dbReference type="NCBIfam" id="TIGR01171">
    <property type="entry name" value="rplB_bact"/>
    <property type="match status" value="1"/>
</dbReference>
<dbReference type="PANTHER" id="PTHR13691:SF5">
    <property type="entry name" value="LARGE RIBOSOMAL SUBUNIT PROTEIN UL2M"/>
    <property type="match status" value="1"/>
</dbReference>
<dbReference type="PANTHER" id="PTHR13691">
    <property type="entry name" value="RIBOSOMAL PROTEIN L2"/>
    <property type="match status" value="1"/>
</dbReference>
<dbReference type="Pfam" id="PF00181">
    <property type="entry name" value="Ribosomal_L2"/>
    <property type="match status" value="1"/>
</dbReference>
<dbReference type="Pfam" id="PF03947">
    <property type="entry name" value="Ribosomal_L2_C"/>
    <property type="match status" value="1"/>
</dbReference>
<dbReference type="PIRSF" id="PIRSF002158">
    <property type="entry name" value="Ribosomal_L2"/>
    <property type="match status" value="1"/>
</dbReference>
<dbReference type="SMART" id="SM01383">
    <property type="entry name" value="Ribosomal_L2"/>
    <property type="match status" value="1"/>
</dbReference>
<dbReference type="SMART" id="SM01382">
    <property type="entry name" value="Ribosomal_L2_C"/>
    <property type="match status" value="1"/>
</dbReference>
<dbReference type="SUPFAM" id="SSF50249">
    <property type="entry name" value="Nucleic acid-binding proteins"/>
    <property type="match status" value="1"/>
</dbReference>
<dbReference type="SUPFAM" id="SSF50104">
    <property type="entry name" value="Translation proteins SH3-like domain"/>
    <property type="match status" value="1"/>
</dbReference>
<dbReference type="PROSITE" id="PS00467">
    <property type="entry name" value="RIBOSOMAL_L2"/>
    <property type="match status" value="1"/>
</dbReference>
<evidence type="ECO:0000255" key="1">
    <source>
        <dbReference type="HAMAP-Rule" id="MF_01320"/>
    </source>
</evidence>
<evidence type="ECO:0000256" key="2">
    <source>
        <dbReference type="SAM" id="MobiDB-lite"/>
    </source>
</evidence>
<evidence type="ECO:0000305" key="3"/>
<gene>
    <name evidence="1" type="primary">rplB</name>
    <name type="ordered locus">CbuG_1764</name>
</gene>
<protein>
    <recommendedName>
        <fullName evidence="1">Large ribosomal subunit protein uL2</fullName>
    </recommendedName>
    <alternativeName>
        <fullName evidence="3">50S ribosomal protein L2</fullName>
    </alternativeName>
</protein>
<accession>B6J260</accession>
<reference key="1">
    <citation type="journal article" date="2009" name="Infect. Immun.">
        <title>Comparative genomics reveal extensive transposon-mediated genomic plasticity and diversity among potential effector proteins within the genus Coxiella.</title>
        <authorList>
            <person name="Beare P.A."/>
            <person name="Unsworth N."/>
            <person name="Andoh M."/>
            <person name="Voth D.E."/>
            <person name="Omsland A."/>
            <person name="Gilk S.D."/>
            <person name="Williams K.P."/>
            <person name="Sobral B.W."/>
            <person name="Kupko J.J. III"/>
            <person name="Porcella S.F."/>
            <person name="Samuel J.E."/>
            <person name="Heinzen R.A."/>
        </authorList>
    </citation>
    <scope>NUCLEOTIDE SEQUENCE [LARGE SCALE GENOMIC DNA]</scope>
    <source>
        <strain>CbuG_Q212</strain>
    </source>
</reference>
<keyword id="KW-0687">Ribonucleoprotein</keyword>
<keyword id="KW-0689">Ribosomal protein</keyword>
<keyword id="KW-0694">RNA-binding</keyword>
<keyword id="KW-0699">rRNA-binding</keyword>
<proteinExistence type="inferred from homology"/>
<feature type="chain" id="PRO_1000165738" description="Large ribosomal subunit protein uL2">
    <location>
        <begin position="1"/>
        <end position="275"/>
    </location>
</feature>
<feature type="region of interest" description="Disordered" evidence="2">
    <location>
        <begin position="208"/>
        <end position="275"/>
    </location>
</feature>
<feature type="compositionally biased region" description="Basic residues" evidence="2">
    <location>
        <begin position="209"/>
        <end position="219"/>
    </location>
</feature>
<feature type="compositionally biased region" description="Basic residues" evidence="2">
    <location>
        <begin position="254"/>
        <end position="263"/>
    </location>
</feature>
<sequence>MALVKTKPTSPGRRFVVKVVHPELHKGDPYAPLVESKNRINSRNNQGRITVRRRGGGHKRNYRIIDFKRDKEGIEGKVERLEYDPNRSAHIALVLYPDGERRYIIAPKGVHKGSKVVSGREAPIRPGNCLPLQNIPLGATIHNIELKPGKGAQLVRSAGASAQLAAKEGIYAIIRMRSGETRKILAVCRACIGEVSNSEHNLRSLGKAGAKRWRGRRPTVRGVAMNPVDHPHGGGEGKTSGGRHPVSPTGKPTKGYKTRRNKRTSNMIIRDRRKK</sequence>
<comment type="function">
    <text evidence="1">One of the primary rRNA binding proteins. Required for association of the 30S and 50S subunits to form the 70S ribosome, for tRNA binding and peptide bond formation. It has been suggested to have peptidyltransferase activity; this is somewhat controversial. Makes several contacts with the 16S rRNA in the 70S ribosome.</text>
</comment>
<comment type="subunit">
    <text evidence="1">Part of the 50S ribosomal subunit. Forms a bridge to the 30S subunit in the 70S ribosome.</text>
</comment>
<comment type="similarity">
    <text evidence="1">Belongs to the universal ribosomal protein uL2 family.</text>
</comment>
<name>RL2_COXB2</name>
<organism>
    <name type="scientific">Coxiella burnetii (strain CbuG_Q212)</name>
    <name type="common">Coxiella burnetii (strain Q212)</name>
    <dbReference type="NCBI Taxonomy" id="434923"/>
    <lineage>
        <taxon>Bacteria</taxon>
        <taxon>Pseudomonadati</taxon>
        <taxon>Pseudomonadota</taxon>
        <taxon>Gammaproteobacteria</taxon>
        <taxon>Legionellales</taxon>
        <taxon>Coxiellaceae</taxon>
        <taxon>Coxiella</taxon>
    </lineage>
</organism>